<sequence length="251" mass="26588">MLLIPAIDLKDGQCVRLKQGDMDQATIFSEDPAAMARKWVDLGARRLHLVDLNGAFAGKPKNLEAIEAILGEVGDEIPVQLGGGIRSLETIEKYLDAGLSYVIIGTAAVKDPGFLQDACSAFAGNIIVGLDAKDGKVATDGWSKLTGHEVIDLARKFEDYGVESIVYTDIGRDGMLQGINIEATVKLAQAVGIPVIASGGLSNIVDIEKLCEVEDEGIEGVICGRAIYSGDLDFAAAQKRADELNGELDDA</sequence>
<name>HIS4_BURMS</name>
<evidence type="ECO:0000255" key="1">
    <source>
        <dbReference type="HAMAP-Rule" id="MF_01014"/>
    </source>
</evidence>
<keyword id="KW-0028">Amino-acid biosynthesis</keyword>
<keyword id="KW-0963">Cytoplasm</keyword>
<keyword id="KW-0368">Histidine biosynthesis</keyword>
<keyword id="KW-0413">Isomerase</keyword>
<comment type="catalytic activity">
    <reaction evidence="1">
        <text>1-(5-phospho-beta-D-ribosyl)-5-[(5-phospho-beta-D-ribosylamino)methylideneamino]imidazole-4-carboxamide = 5-[(5-phospho-1-deoxy-D-ribulos-1-ylimino)methylamino]-1-(5-phospho-beta-D-ribosyl)imidazole-4-carboxamide</text>
        <dbReference type="Rhea" id="RHEA:15469"/>
        <dbReference type="ChEBI" id="CHEBI:58435"/>
        <dbReference type="ChEBI" id="CHEBI:58525"/>
        <dbReference type="EC" id="5.3.1.16"/>
    </reaction>
</comment>
<comment type="pathway">
    <text evidence="1">Amino-acid biosynthesis; L-histidine biosynthesis; L-histidine from 5-phospho-alpha-D-ribose 1-diphosphate: step 4/9.</text>
</comment>
<comment type="subcellular location">
    <subcellularLocation>
        <location evidence="1">Cytoplasm</location>
    </subcellularLocation>
</comment>
<comment type="similarity">
    <text evidence="1">Belongs to the HisA/HisF family.</text>
</comment>
<dbReference type="EC" id="5.3.1.16" evidence="1"/>
<dbReference type="EMBL" id="CP000526">
    <property type="protein sequence ID" value="ABM52724.1"/>
    <property type="molecule type" value="Genomic_DNA"/>
</dbReference>
<dbReference type="RefSeq" id="WP_004199906.1">
    <property type="nucleotide sequence ID" value="NC_008785.1"/>
</dbReference>
<dbReference type="SMR" id="A1V8H4"/>
<dbReference type="GeneID" id="93061751"/>
<dbReference type="KEGG" id="bmv:BMASAVP1_A3244"/>
<dbReference type="HOGENOM" id="CLU_048577_1_1_4"/>
<dbReference type="UniPathway" id="UPA00031">
    <property type="reaction ID" value="UER00009"/>
</dbReference>
<dbReference type="GO" id="GO:0005737">
    <property type="term" value="C:cytoplasm"/>
    <property type="evidence" value="ECO:0007669"/>
    <property type="project" value="UniProtKB-SubCell"/>
</dbReference>
<dbReference type="GO" id="GO:0003949">
    <property type="term" value="F:1-(5-phosphoribosyl)-5-[(5-phosphoribosylamino)methylideneamino]imidazole-4-carboxamide isomerase activity"/>
    <property type="evidence" value="ECO:0007669"/>
    <property type="project" value="UniProtKB-UniRule"/>
</dbReference>
<dbReference type="GO" id="GO:0000105">
    <property type="term" value="P:L-histidine biosynthetic process"/>
    <property type="evidence" value="ECO:0007669"/>
    <property type="project" value="UniProtKB-UniRule"/>
</dbReference>
<dbReference type="GO" id="GO:0000162">
    <property type="term" value="P:L-tryptophan biosynthetic process"/>
    <property type="evidence" value="ECO:0007669"/>
    <property type="project" value="TreeGrafter"/>
</dbReference>
<dbReference type="CDD" id="cd04732">
    <property type="entry name" value="HisA"/>
    <property type="match status" value="1"/>
</dbReference>
<dbReference type="FunFam" id="3.20.20.70:FF:000009">
    <property type="entry name" value="1-(5-phosphoribosyl)-5-[(5-phosphoribosylamino)methylideneamino] imidazole-4-carboxamide isomerase"/>
    <property type="match status" value="1"/>
</dbReference>
<dbReference type="Gene3D" id="3.20.20.70">
    <property type="entry name" value="Aldolase class I"/>
    <property type="match status" value="1"/>
</dbReference>
<dbReference type="HAMAP" id="MF_01014">
    <property type="entry name" value="HisA"/>
    <property type="match status" value="1"/>
</dbReference>
<dbReference type="InterPro" id="IPR013785">
    <property type="entry name" value="Aldolase_TIM"/>
</dbReference>
<dbReference type="InterPro" id="IPR006062">
    <property type="entry name" value="His_biosynth"/>
</dbReference>
<dbReference type="InterPro" id="IPR006063">
    <property type="entry name" value="HisA_bact_arch"/>
</dbReference>
<dbReference type="InterPro" id="IPR044524">
    <property type="entry name" value="Isoase_HisA-like"/>
</dbReference>
<dbReference type="InterPro" id="IPR023016">
    <property type="entry name" value="Isoase_HisA-like_bact"/>
</dbReference>
<dbReference type="InterPro" id="IPR011060">
    <property type="entry name" value="RibuloseP-bd_barrel"/>
</dbReference>
<dbReference type="NCBIfam" id="TIGR00007">
    <property type="entry name" value="1-(5-phosphoribosyl)-5-[(5-phosphoribosylamino)methylideneamino]imidazole-4-carboxamide isomerase"/>
    <property type="match status" value="1"/>
</dbReference>
<dbReference type="NCBIfam" id="NF010112">
    <property type="entry name" value="PRK13585.1"/>
    <property type="match status" value="1"/>
</dbReference>
<dbReference type="PANTHER" id="PTHR43090">
    <property type="entry name" value="1-(5-PHOSPHORIBOSYL)-5-[(5-PHOSPHORIBOSYLAMINO)METHYLIDENEAMINO] IMIDAZOLE-4-CARBOXAMIDE ISOMERASE"/>
    <property type="match status" value="1"/>
</dbReference>
<dbReference type="PANTHER" id="PTHR43090:SF2">
    <property type="entry name" value="1-(5-PHOSPHORIBOSYL)-5-[(5-PHOSPHORIBOSYLAMINO)METHYLIDENEAMINO] IMIDAZOLE-4-CARBOXAMIDE ISOMERASE"/>
    <property type="match status" value="1"/>
</dbReference>
<dbReference type="Pfam" id="PF00977">
    <property type="entry name" value="His_biosynth"/>
    <property type="match status" value="1"/>
</dbReference>
<dbReference type="SUPFAM" id="SSF51366">
    <property type="entry name" value="Ribulose-phoshate binding barrel"/>
    <property type="match status" value="1"/>
</dbReference>
<accession>A1V8H4</accession>
<feature type="chain" id="PRO_1000063192" description="1-(5-phosphoribosyl)-5-[(5-phosphoribosylamino)methylideneamino] imidazole-4-carboxamide isomerase">
    <location>
        <begin position="1"/>
        <end position="251"/>
    </location>
</feature>
<feature type="active site" description="Proton acceptor" evidence="1">
    <location>
        <position position="8"/>
    </location>
</feature>
<feature type="active site" description="Proton donor" evidence="1">
    <location>
        <position position="131"/>
    </location>
</feature>
<protein>
    <recommendedName>
        <fullName evidence="1">1-(5-phosphoribosyl)-5-[(5-phosphoribosylamino)methylideneamino] imidazole-4-carboxamide isomerase</fullName>
        <ecNumber evidence="1">5.3.1.16</ecNumber>
    </recommendedName>
    <alternativeName>
        <fullName evidence="1">Phosphoribosylformimino-5-aminoimidazole carboxamide ribotide isomerase</fullName>
    </alternativeName>
</protein>
<proteinExistence type="inferred from homology"/>
<gene>
    <name evidence="1" type="primary">hisA</name>
    <name type="ordered locus">BMASAVP1_A3244</name>
</gene>
<organism>
    <name type="scientific">Burkholderia mallei (strain SAVP1)</name>
    <dbReference type="NCBI Taxonomy" id="320388"/>
    <lineage>
        <taxon>Bacteria</taxon>
        <taxon>Pseudomonadati</taxon>
        <taxon>Pseudomonadota</taxon>
        <taxon>Betaproteobacteria</taxon>
        <taxon>Burkholderiales</taxon>
        <taxon>Burkholderiaceae</taxon>
        <taxon>Burkholderia</taxon>
        <taxon>pseudomallei group</taxon>
    </lineage>
</organism>
<reference key="1">
    <citation type="journal article" date="2010" name="Genome Biol. Evol.">
        <title>Continuing evolution of Burkholderia mallei through genome reduction and large-scale rearrangements.</title>
        <authorList>
            <person name="Losada L."/>
            <person name="Ronning C.M."/>
            <person name="DeShazer D."/>
            <person name="Woods D."/>
            <person name="Fedorova N."/>
            <person name="Kim H.S."/>
            <person name="Shabalina S.A."/>
            <person name="Pearson T.R."/>
            <person name="Brinkac L."/>
            <person name="Tan P."/>
            <person name="Nandi T."/>
            <person name="Crabtree J."/>
            <person name="Badger J."/>
            <person name="Beckstrom-Sternberg S."/>
            <person name="Saqib M."/>
            <person name="Schutzer S.E."/>
            <person name="Keim P."/>
            <person name="Nierman W.C."/>
        </authorList>
    </citation>
    <scope>NUCLEOTIDE SEQUENCE [LARGE SCALE GENOMIC DNA]</scope>
    <source>
        <strain>SAVP1</strain>
    </source>
</reference>